<reference key="1">
    <citation type="submission" date="2006-12" db="EMBL/GenBank/DDBJ databases">
        <title>Complete sequence of Halorhodospira halophila SL1.</title>
        <authorList>
            <consortium name="US DOE Joint Genome Institute"/>
            <person name="Copeland A."/>
            <person name="Lucas S."/>
            <person name="Lapidus A."/>
            <person name="Barry K."/>
            <person name="Detter J.C."/>
            <person name="Glavina del Rio T."/>
            <person name="Hammon N."/>
            <person name="Israni S."/>
            <person name="Dalin E."/>
            <person name="Tice H."/>
            <person name="Pitluck S."/>
            <person name="Saunders E."/>
            <person name="Brettin T."/>
            <person name="Bruce D."/>
            <person name="Han C."/>
            <person name="Tapia R."/>
            <person name="Schmutz J."/>
            <person name="Larimer F."/>
            <person name="Land M."/>
            <person name="Hauser L."/>
            <person name="Kyrpides N."/>
            <person name="Mikhailova N."/>
            <person name="Hoff W."/>
            <person name="Richardson P."/>
        </authorList>
    </citation>
    <scope>NUCLEOTIDE SEQUENCE [LARGE SCALE GENOMIC DNA]</scope>
    <source>
        <strain>DSM 244 / SL1</strain>
    </source>
</reference>
<protein>
    <recommendedName>
        <fullName evidence="1">Leucine--tRNA ligase</fullName>
        <ecNumber evidence="1">6.1.1.4</ecNumber>
    </recommendedName>
    <alternativeName>
        <fullName evidence="1">Leucyl-tRNA synthetase</fullName>
        <shortName evidence="1">LeuRS</shortName>
    </alternativeName>
</protein>
<evidence type="ECO:0000255" key="1">
    <source>
        <dbReference type="HAMAP-Rule" id="MF_00049"/>
    </source>
</evidence>
<feature type="chain" id="PRO_1000009352" description="Leucine--tRNA ligase">
    <location>
        <begin position="1"/>
        <end position="817"/>
    </location>
</feature>
<feature type="short sequence motif" description="'HIGH' region">
    <location>
        <begin position="42"/>
        <end position="52"/>
    </location>
</feature>
<feature type="short sequence motif" description="'KMSKS' region">
    <location>
        <begin position="576"/>
        <end position="580"/>
    </location>
</feature>
<feature type="binding site" evidence="1">
    <location>
        <position position="579"/>
    </location>
    <ligand>
        <name>ATP</name>
        <dbReference type="ChEBI" id="CHEBI:30616"/>
    </ligand>
</feature>
<name>SYL_HALHL</name>
<proteinExistence type="inferred from homology"/>
<accession>A1WYZ7</accession>
<sequence>MDNQYQPKEIEAEAQAYWEQQQTFQAREDSARPKYYCLSMFPYPSGRLHMGHVRNYTIGDVVSRYKRMQGYNVLQPMGWDAFGLPAENAAMERGVPPAAWTRENIGAMREQLKGLGFGYDWSRELATCDPEYYRWEQWLFIRLYRKGLVYRDTAAVNWDPVDQTVLANEQVIEGRGWRSGALVERREIPQWFLRITDYADELLEALDELDGWPEQVRNMQRNWIGRSEGVELSFDLAGRDEQLTVFTTRPDTLYGVTYMGLAPEHPISLELAEHHPAIAELVEEARSGGTAEADLATREKRGADTGLEAIHPLTGERIPVWVANFVLMEYGSGAVMAVPAHDQRDWEFASTYGLPIRPVVHPADGTELDIAAGAFSDYGVLADSGPFSGMPSDRAFAAIAERLEAEGRGQRRVQYRLRDWGVSRQRYWGAPIPMIHCADCGPVPVPDDQLPVTLPEDVEISGGGSPLKSMPAFYQTACPQCGADAERETDTFDTFMESSWYFARFACADQDGAMLDERADHWTPVDQYIGGIEHAVLHLLYARFYHKVLRDEGLVSSDEPFTRLLTQGMVLKDGTKMSKSKGNTVDPQELVDRFGADTVRLFTMFAAPPDQSLEWSDSGVEGAYRFLRRLHGLVRDHVAAGPAPALDPQALSDTQRDLRRKVHETIAKASDDVGKRLTFNTAIAAVMELCNALGKAQDDSAAGRAVMQEGLEAAVLILAPITPHLCHHLWFQLGHTAPVVEAPWPEADKQALVRDEVELVVQVNGKLRGHVTLPADADQQQAQEAALAEHNVQRFVADKEIKKVVFVPGKLINVVAK</sequence>
<dbReference type="EC" id="6.1.1.4" evidence="1"/>
<dbReference type="EMBL" id="CP000544">
    <property type="protein sequence ID" value="ABM62909.1"/>
    <property type="molecule type" value="Genomic_DNA"/>
</dbReference>
<dbReference type="RefSeq" id="WP_011814931.1">
    <property type="nucleotide sequence ID" value="NC_008789.1"/>
</dbReference>
<dbReference type="SMR" id="A1WYZ7"/>
<dbReference type="STRING" id="349124.Hhal_2145"/>
<dbReference type="KEGG" id="hha:Hhal_2145"/>
<dbReference type="eggNOG" id="COG0495">
    <property type="taxonomic scope" value="Bacteria"/>
</dbReference>
<dbReference type="HOGENOM" id="CLU_004427_0_0_6"/>
<dbReference type="OrthoDB" id="9810365at2"/>
<dbReference type="Proteomes" id="UP000000647">
    <property type="component" value="Chromosome"/>
</dbReference>
<dbReference type="GO" id="GO:0005829">
    <property type="term" value="C:cytosol"/>
    <property type="evidence" value="ECO:0007669"/>
    <property type="project" value="TreeGrafter"/>
</dbReference>
<dbReference type="GO" id="GO:0002161">
    <property type="term" value="F:aminoacyl-tRNA deacylase activity"/>
    <property type="evidence" value="ECO:0007669"/>
    <property type="project" value="InterPro"/>
</dbReference>
<dbReference type="GO" id="GO:0005524">
    <property type="term" value="F:ATP binding"/>
    <property type="evidence" value="ECO:0007669"/>
    <property type="project" value="UniProtKB-UniRule"/>
</dbReference>
<dbReference type="GO" id="GO:0004823">
    <property type="term" value="F:leucine-tRNA ligase activity"/>
    <property type="evidence" value="ECO:0007669"/>
    <property type="project" value="UniProtKB-UniRule"/>
</dbReference>
<dbReference type="GO" id="GO:0006429">
    <property type="term" value="P:leucyl-tRNA aminoacylation"/>
    <property type="evidence" value="ECO:0007669"/>
    <property type="project" value="UniProtKB-UniRule"/>
</dbReference>
<dbReference type="CDD" id="cd07958">
    <property type="entry name" value="Anticodon_Ia_Leu_BEm"/>
    <property type="match status" value="1"/>
</dbReference>
<dbReference type="CDD" id="cd00812">
    <property type="entry name" value="LeuRS_core"/>
    <property type="match status" value="1"/>
</dbReference>
<dbReference type="FunFam" id="1.10.730.10:FF:000003">
    <property type="entry name" value="Leucine--tRNA ligase"/>
    <property type="match status" value="1"/>
</dbReference>
<dbReference type="FunFam" id="3.10.20.590:FF:000001">
    <property type="entry name" value="Leucine--tRNA ligase"/>
    <property type="match status" value="1"/>
</dbReference>
<dbReference type="FunFam" id="3.40.50.620:FF:000124">
    <property type="entry name" value="Leucine--tRNA ligase"/>
    <property type="match status" value="1"/>
</dbReference>
<dbReference type="FunFam" id="3.40.50.620:FF:000395">
    <property type="entry name" value="Leucine--tRNA ligase"/>
    <property type="match status" value="1"/>
</dbReference>
<dbReference type="FunFam" id="3.90.740.10:FF:000012">
    <property type="entry name" value="Leucine--tRNA ligase"/>
    <property type="match status" value="1"/>
</dbReference>
<dbReference type="Gene3D" id="3.10.20.590">
    <property type="match status" value="1"/>
</dbReference>
<dbReference type="Gene3D" id="3.40.50.620">
    <property type="entry name" value="HUPs"/>
    <property type="match status" value="2"/>
</dbReference>
<dbReference type="Gene3D" id="1.10.730.10">
    <property type="entry name" value="Isoleucyl-tRNA Synthetase, Domain 1"/>
    <property type="match status" value="1"/>
</dbReference>
<dbReference type="Gene3D" id="3.90.740.10">
    <property type="entry name" value="Valyl/Leucyl/Isoleucyl-tRNA synthetase, editing domain"/>
    <property type="match status" value="1"/>
</dbReference>
<dbReference type="HAMAP" id="MF_00049_B">
    <property type="entry name" value="Leu_tRNA_synth_B"/>
    <property type="match status" value="1"/>
</dbReference>
<dbReference type="InterPro" id="IPR001412">
    <property type="entry name" value="aa-tRNA-synth_I_CS"/>
</dbReference>
<dbReference type="InterPro" id="IPR002300">
    <property type="entry name" value="aa-tRNA-synth_Ia"/>
</dbReference>
<dbReference type="InterPro" id="IPR002302">
    <property type="entry name" value="Leu-tRNA-ligase"/>
</dbReference>
<dbReference type="InterPro" id="IPR025709">
    <property type="entry name" value="Leu_tRNA-synth_edit"/>
</dbReference>
<dbReference type="InterPro" id="IPR013155">
    <property type="entry name" value="M/V/L/I-tRNA-synth_anticd-bd"/>
</dbReference>
<dbReference type="InterPro" id="IPR015413">
    <property type="entry name" value="Methionyl/Leucyl_tRNA_Synth"/>
</dbReference>
<dbReference type="InterPro" id="IPR014729">
    <property type="entry name" value="Rossmann-like_a/b/a_fold"/>
</dbReference>
<dbReference type="InterPro" id="IPR009080">
    <property type="entry name" value="tRNAsynth_Ia_anticodon-bd"/>
</dbReference>
<dbReference type="InterPro" id="IPR009008">
    <property type="entry name" value="Val/Leu/Ile-tRNA-synth_edit"/>
</dbReference>
<dbReference type="NCBIfam" id="TIGR00396">
    <property type="entry name" value="leuS_bact"/>
    <property type="match status" value="1"/>
</dbReference>
<dbReference type="PANTHER" id="PTHR43740:SF2">
    <property type="entry name" value="LEUCINE--TRNA LIGASE, MITOCHONDRIAL"/>
    <property type="match status" value="1"/>
</dbReference>
<dbReference type="PANTHER" id="PTHR43740">
    <property type="entry name" value="LEUCYL-TRNA SYNTHETASE"/>
    <property type="match status" value="1"/>
</dbReference>
<dbReference type="Pfam" id="PF08264">
    <property type="entry name" value="Anticodon_1"/>
    <property type="match status" value="1"/>
</dbReference>
<dbReference type="Pfam" id="PF00133">
    <property type="entry name" value="tRNA-synt_1"/>
    <property type="match status" value="1"/>
</dbReference>
<dbReference type="Pfam" id="PF13603">
    <property type="entry name" value="tRNA-synt_1_2"/>
    <property type="match status" value="1"/>
</dbReference>
<dbReference type="Pfam" id="PF09334">
    <property type="entry name" value="tRNA-synt_1g"/>
    <property type="match status" value="1"/>
</dbReference>
<dbReference type="PRINTS" id="PR00985">
    <property type="entry name" value="TRNASYNTHLEU"/>
</dbReference>
<dbReference type="SUPFAM" id="SSF47323">
    <property type="entry name" value="Anticodon-binding domain of a subclass of class I aminoacyl-tRNA synthetases"/>
    <property type="match status" value="1"/>
</dbReference>
<dbReference type="SUPFAM" id="SSF52374">
    <property type="entry name" value="Nucleotidylyl transferase"/>
    <property type="match status" value="1"/>
</dbReference>
<dbReference type="SUPFAM" id="SSF50677">
    <property type="entry name" value="ValRS/IleRS/LeuRS editing domain"/>
    <property type="match status" value="1"/>
</dbReference>
<dbReference type="PROSITE" id="PS00178">
    <property type="entry name" value="AA_TRNA_LIGASE_I"/>
    <property type="match status" value="1"/>
</dbReference>
<keyword id="KW-0030">Aminoacyl-tRNA synthetase</keyword>
<keyword id="KW-0067">ATP-binding</keyword>
<keyword id="KW-0963">Cytoplasm</keyword>
<keyword id="KW-0436">Ligase</keyword>
<keyword id="KW-0547">Nucleotide-binding</keyword>
<keyword id="KW-0648">Protein biosynthesis</keyword>
<keyword id="KW-1185">Reference proteome</keyword>
<organism>
    <name type="scientific">Halorhodospira halophila (strain DSM 244 / SL1)</name>
    <name type="common">Ectothiorhodospira halophila (strain DSM 244 / SL1)</name>
    <dbReference type="NCBI Taxonomy" id="349124"/>
    <lineage>
        <taxon>Bacteria</taxon>
        <taxon>Pseudomonadati</taxon>
        <taxon>Pseudomonadota</taxon>
        <taxon>Gammaproteobacteria</taxon>
        <taxon>Chromatiales</taxon>
        <taxon>Ectothiorhodospiraceae</taxon>
        <taxon>Halorhodospira</taxon>
    </lineage>
</organism>
<gene>
    <name evidence="1" type="primary">leuS</name>
    <name type="ordered locus">Hhal_2145</name>
</gene>
<comment type="catalytic activity">
    <reaction evidence="1">
        <text>tRNA(Leu) + L-leucine + ATP = L-leucyl-tRNA(Leu) + AMP + diphosphate</text>
        <dbReference type="Rhea" id="RHEA:11688"/>
        <dbReference type="Rhea" id="RHEA-COMP:9613"/>
        <dbReference type="Rhea" id="RHEA-COMP:9622"/>
        <dbReference type="ChEBI" id="CHEBI:30616"/>
        <dbReference type="ChEBI" id="CHEBI:33019"/>
        <dbReference type="ChEBI" id="CHEBI:57427"/>
        <dbReference type="ChEBI" id="CHEBI:78442"/>
        <dbReference type="ChEBI" id="CHEBI:78494"/>
        <dbReference type="ChEBI" id="CHEBI:456215"/>
        <dbReference type="EC" id="6.1.1.4"/>
    </reaction>
</comment>
<comment type="subcellular location">
    <subcellularLocation>
        <location evidence="1">Cytoplasm</location>
    </subcellularLocation>
</comment>
<comment type="similarity">
    <text evidence="1">Belongs to the class-I aminoacyl-tRNA synthetase family.</text>
</comment>